<name>GLYA_STUS1</name>
<dbReference type="EC" id="2.1.2.1" evidence="1"/>
<dbReference type="EMBL" id="CP000304">
    <property type="protein sequence ID" value="ABP78637.1"/>
    <property type="molecule type" value="Genomic_DNA"/>
</dbReference>
<dbReference type="RefSeq" id="WP_011912130.1">
    <property type="nucleotide sequence ID" value="NC_009434.1"/>
</dbReference>
<dbReference type="SMR" id="A4VI36"/>
<dbReference type="GeneID" id="66820086"/>
<dbReference type="KEGG" id="psa:PST_0940"/>
<dbReference type="eggNOG" id="COG0112">
    <property type="taxonomic scope" value="Bacteria"/>
</dbReference>
<dbReference type="HOGENOM" id="CLU_022477_2_1_6"/>
<dbReference type="UniPathway" id="UPA00193"/>
<dbReference type="UniPathway" id="UPA00288">
    <property type="reaction ID" value="UER01023"/>
</dbReference>
<dbReference type="Proteomes" id="UP000000233">
    <property type="component" value="Chromosome"/>
</dbReference>
<dbReference type="GO" id="GO:0005829">
    <property type="term" value="C:cytosol"/>
    <property type="evidence" value="ECO:0007669"/>
    <property type="project" value="TreeGrafter"/>
</dbReference>
<dbReference type="GO" id="GO:0004372">
    <property type="term" value="F:glycine hydroxymethyltransferase activity"/>
    <property type="evidence" value="ECO:0007669"/>
    <property type="project" value="UniProtKB-UniRule"/>
</dbReference>
<dbReference type="GO" id="GO:0030170">
    <property type="term" value="F:pyridoxal phosphate binding"/>
    <property type="evidence" value="ECO:0007669"/>
    <property type="project" value="UniProtKB-UniRule"/>
</dbReference>
<dbReference type="GO" id="GO:0019264">
    <property type="term" value="P:glycine biosynthetic process from serine"/>
    <property type="evidence" value="ECO:0007669"/>
    <property type="project" value="UniProtKB-UniRule"/>
</dbReference>
<dbReference type="GO" id="GO:0035999">
    <property type="term" value="P:tetrahydrofolate interconversion"/>
    <property type="evidence" value="ECO:0007669"/>
    <property type="project" value="UniProtKB-UniRule"/>
</dbReference>
<dbReference type="CDD" id="cd00378">
    <property type="entry name" value="SHMT"/>
    <property type="match status" value="1"/>
</dbReference>
<dbReference type="FunFam" id="3.40.640.10:FF:000001">
    <property type="entry name" value="Serine hydroxymethyltransferase"/>
    <property type="match status" value="1"/>
</dbReference>
<dbReference type="FunFam" id="3.90.1150.10:FF:000003">
    <property type="entry name" value="Serine hydroxymethyltransferase"/>
    <property type="match status" value="1"/>
</dbReference>
<dbReference type="Gene3D" id="3.90.1150.10">
    <property type="entry name" value="Aspartate Aminotransferase, domain 1"/>
    <property type="match status" value="1"/>
</dbReference>
<dbReference type="Gene3D" id="3.40.640.10">
    <property type="entry name" value="Type I PLP-dependent aspartate aminotransferase-like (Major domain)"/>
    <property type="match status" value="1"/>
</dbReference>
<dbReference type="HAMAP" id="MF_00051">
    <property type="entry name" value="SHMT"/>
    <property type="match status" value="1"/>
</dbReference>
<dbReference type="InterPro" id="IPR015424">
    <property type="entry name" value="PyrdxlP-dep_Trfase"/>
</dbReference>
<dbReference type="InterPro" id="IPR015421">
    <property type="entry name" value="PyrdxlP-dep_Trfase_major"/>
</dbReference>
<dbReference type="InterPro" id="IPR015422">
    <property type="entry name" value="PyrdxlP-dep_Trfase_small"/>
</dbReference>
<dbReference type="InterPro" id="IPR001085">
    <property type="entry name" value="Ser_HO-MeTrfase"/>
</dbReference>
<dbReference type="InterPro" id="IPR049943">
    <property type="entry name" value="Ser_HO-MeTrfase-like"/>
</dbReference>
<dbReference type="InterPro" id="IPR019798">
    <property type="entry name" value="Ser_HO-MeTrfase_PLP_BS"/>
</dbReference>
<dbReference type="InterPro" id="IPR039429">
    <property type="entry name" value="SHMT-like_dom"/>
</dbReference>
<dbReference type="NCBIfam" id="NF000586">
    <property type="entry name" value="PRK00011.1"/>
    <property type="match status" value="1"/>
</dbReference>
<dbReference type="PANTHER" id="PTHR11680">
    <property type="entry name" value="SERINE HYDROXYMETHYLTRANSFERASE"/>
    <property type="match status" value="1"/>
</dbReference>
<dbReference type="PANTHER" id="PTHR11680:SF50">
    <property type="entry name" value="SERINE HYDROXYMETHYLTRANSFERASE"/>
    <property type="match status" value="1"/>
</dbReference>
<dbReference type="Pfam" id="PF00464">
    <property type="entry name" value="SHMT"/>
    <property type="match status" value="1"/>
</dbReference>
<dbReference type="PIRSF" id="PIRSF000412">
    <property type="entry name" value="SHMT"/>
    <property type="match status" value="1"/>
</dbReference>
<dbReference type="SUPFAM" id="SSF53383">
    <property type="entry name" value="PLP-dependent transferases"/>
    <property type="match status" value="1"/>
</dbReference>
<dbReference type="PROSITE" id="PS00096">
    <property type="entry name" value="SHMT"/>
    <property type="match status" value="1"/>
</dbReference>
<reference key="1">
    <citation type="journal article" date="2008" name="Proc. Natl. Acad. Sci. U.S.A.">
        <title>Nitrogen fixation island and rhizosphere competence traits in the genome of root-associated Pseudomonas stutzeri A1501.</title>
        <authorList>
            <person name="Yan Y."/>
            <person name="Yang J."/>
            <person name="Dou Y."/>
            <person name="Chen M."/>
            <person name="Ping S."/>
            <person name="Peng J."/>
            <person name="Lu W."/>
            <person name="Zhang W."/>
            <person name="Yao Z."/>
            <person name="Li H."/>
            <person name="Liu W."/>
            <person name="He S."/>
            <person name="Geng L."/>
            <person name="Zhang X."/>
            <person name="Yang F."/>
            <person name="Yu H."/>
            <person name="Zhan Y."/>
            <person name="Li D."/>
            <person name="Lin Z."/>
            <person name="Wang Y."/>
            <person name="Elmerich C."/>
            <person name="Lin M."/>
            <person name="Jin Q."/>
        </authorList>
    </citation>
    <scope>NUCLEOTIDE SEQUENCE [LARGE SCALE GENOMIC DNA]</scope>
    <source>
        <strain>A1501</strain>
    </source>
</reference>
<keyword id="KW-0028">Amino-acid biosynthesis</keyword>
<keyword id="KW-0963">Cytoplasm</keyword>
<keyword id="KW-0554">One-carbon metabolism</keyword>
<keyword id="KW-0663">Pyridoxal phosphate</keyword>
<keyword id="KW-1185">Reference proteome</keyword>
<keyword id="KW-0808">Transferase</keyword>
<evidence type="ECO:0000255" key="1">
    <source>
        <dbReference type="HAMAP-Rule" id="MF_00051"/>
    </source>
</evidence>
<proteinExistence type="inferred from homology"/>
<accession>A4VI36</accession>
<feature type="chain" id="PRO_1000006299" description="Serine hydroxymethyltransferase">
    <location>
        <begin position="1"/>
        <end position="417"/>
    </location>
</feature>
<feature type="binding site" evidence="1">
    <location>
        <position position="121"/>
    </location>
    <ligand>
        <name>(6S)-5,6,7,8-tetrahydrofolate</name>
        <dbReference type="ChEBI" id="CHEBI:57453"/>
    </ligand>
</feature>
<feature type="binding site" evidence="1">
    <location>
        <begin position="125"/>
        <end position="127"/>
    </location>
    <ligand>
        <name>(6S)-5,6,7,8-tetrahydrofolate</name>
        <dbReference type="ChEBI" id="CHEBI:57453"/>
    </ligand>
</feature>
<feature type="binding site" evidence="1">
    <location>
        <begin position="354"/>
        <end position="356"/>
    </location>
    <ligand>
        <name>(6S)-5,6,7,8-tetrahydrofolate</name>
        <dbReference type="ChEBI" id="CHEBI:57453"/>
    </ligand>
</feature>
<feature type="site" description="Plays an important role in substrate specificity" evidence="1">
    <location>
        <position position="228"/>
    </location>
</feature>
<feature type="modified residue" description="N6-(pyridoxal phosphate)lysine" evidence="1">
    <location>
        <position position="229"/>
    </location>
</feature>
<sequence length="417" mass="44964">MFSRDLTLARFDADLFAAMQQEAKRQEDHIELIASENYTSPAVMEAQGSVLTNKYAEGYPGKRYYGGCEYVDVVEQLAIDRAKELFGADYANVQPHAGSQANAAVYLALLSAGDTILGMSLAHGGHLTHGASVSSSGKLYNAVQYGINDQGLIDYDEVERLAVEHKPKMIVAGFSAYSQKLDFARFREIADKVGAYLFVDMAHVAGLVAAGVYPNPVPFADVVTTTTHKTLRGPRGGLILAKKNEEIEKKLNSAVFPGAQGGPLEHVIAAKAVCFKEALQPEFKAYQQQVVKNAQAMAEVFIQRGFDVVSGGTQNHLFLLSLIKQDITGKDADAALGRAHITVNKNSVPNDPRSPFVTSGLRIGTPAVTTRGFGEAECRELAGWICDILDNMGDESVIDAVRGKVEAVCAKFPVYGN</sequence>
<protein>
    <recommendedName>
        <fullName evidence="1">Serine hydroxymethyltransferase</fullName>
        <shortName evidence="1">SHMT</shortName>
        <shortName evidence="1">Serine methylase</shortName>
        <ecNumber evidence="1">2.1.2.1</ecNumber>
    </recommendedName>
</protein>
<gene>
    <name evidence="1" type="primary">glyA</name>
    <name type="ordered locus">PST_0940</name>
</gene>
<comment type="function">
    <text evidence="1">Catalyzes the reversible interconversion of serine and glycine with tetrahydrofolate (THF) serving as the one-carbon carrier. This reaction serves as the major source of one-carbon groups required for the biosynthesis of purines, thymidylate, methionine, and other important biomolecules. Also exhibits THF-independent aldolase activity toward beta-hydroxyamino acids, producing glycine and aldehydes, via a retro-aldol mechanism.</text>
</comment>
<comment type="catalytic activity">
    <reaction evidence="1">
        <text>(6R)-5,10-methylene-5,6,7,8-tetrahydrofolate + glycine + H2O = (6S)-5,6,7,8-tetrahydrofolate + L-serine</text>
        <dbReference type="Rhea" id="RHEA:15481"/>
        <dbReference type="ChEBI" id="CHEBI:15377"/>
        <dbReference type="ChEBI" id="CHEBI:15636"/>
        <dbReference type="ChEBI" id="CHEBI:33384"/>
        <dbReference type="ChEBI" id="CHEBI:57305"/>
        <dbReference type="ChEBI" id="CHEBI:57453"/>
        <dbReference type="EC" id="2.1.2.1"/>
    </reaction>
</comment>
<comment type="cofactor">
    <cofactor evidence="1">
        <name>pyridoxal 5'-phosphate</name>
        <dbReference type="ChEBI" id="CHEBI:597326"/>
    </cofactor>
</comment>
<comment type="pathway">
    <text evidence="1">One-carbon metabolism; tetrahydrofolate interconversion.</text>
</comment>
<comment type="pathway">
    <text evidence="1">Amino-acid biosynthesis; glycine biosynthesis; glycine from L-serine: step 1/1.</text>
</comment>
<comment type="subunit">
    <text evidence="1">Homodimer.</text>
</comment>
<comment type="subcellular location">
    <subcellularLocation>
        <location evidence="1">Cytoplasm</location>
    </subcellularLocation>
</comment>
<comment type="similarity">
    <text evidence="1">Belongs to the SHMT family.</text>
</comment>
<organism>
    <name type="scientific">Stutzerimonas stutzeri (strain A1501)</name>
    <name type="common">Pseudomonas stutzeri</name>
    <dbReference type="NCBI Taxonomy" id="379731"/>
    <lineage>
        <taxon>Bacteria</taxon>
        <taxon>Pseudomonadati</taxon>
        <taxon>Pseudomonadota</taxon>
        <taxon>Gammaproteobacteria</taxon>
        <taxon>Pseudomonadales</taxon>
        <taxon>Pseudomonadaceae</taxon>
        <taxon>Stutzerimonas</taxon>
    </lineage>
</organism>